<comment type="function">
    <text evidence="1">Removes the pyruvyl group from chorismate, with concomitant aromatization of the ring, to provide 4-hydroxybenzoate (4HB) for the ubiquinone pathway.</text>
</comment>
<comment type="catalytic activity">
    <reaction evidence="1">
        <text>chorismate = 4-hydroxybenzoate + pyruvate</text>
        <dbReference type="Rhea" id="RHEA:16505"/>
        <dbReference type="ChEBI" id="CHEBI:15361"/>
        <dbReference type="ChEBI" id="CHEBI:17879"/>
        <dbReference type="ChEBI" id="CHEBI:29748"/>
        <dbReference type="EC" id="4.1.3.40"/>
    </reaction>
</comment>
<comment type="pathway">
    <text evidence="1">Cofactor biosynthesis; ubiquinone biosynthesis.</text>
</comment>
<comment type="subunit">
    <text evidence="1">Monomer.</text>
</comment>
<comment type="subcellular location">
    <subcellularLocation>
        <location evidence="1">Cytoplasm</location>
    </subcellularLocation>
</comment>
<comment type="similarity">
    <text evidence="1">Belongs to the UbiC family.</text>
</comment>
<dbReference type="EC" id="4.1.3.40" evidence="1"/>
<dbReference type="EMBL" id="AP009240">
    <property type="protein sequence ID" value="BAG79855.1"/>
    <property type="molecule type" value="Genomic_DNA"/>
</dbReference>
<dbReference type="RefSeq" id="WP_001295693.1">
    <property type="nucleotide sequence ID" value="NC_011415.1"/>
</dbReference>
<dbReference type="SMR" id="B6I5Q4"/>
<dbReference type="KEGG" id="ecy:ECSE_4331"/>
<dbReference type="HOGENOM" id="CLU_096824_1_0_6"/>
<dbReference type="UniPathway" id="UPA00232"/>
<dbReference type="Proteomes" id="UP000008199">
    <property type="component" value="Chromosome"/>
</dbReference>
<dbReference type="GO" id="GO:0005829">
    <property type="term" value="C:cytosol"/>
    <property type="evidence" value="ECO:0007669"/>
    <property type="project" value="TreeGrafter"/>
</dbReference>
<dbReference type="GO" id="GO:0008813">
    <property type="term" value="F:chorismate lyase activity"/>
    <property type="evidence" value="ECO:0007669"/>
    <property type="project" value="UniProtKB-UniRule"/>
</dbReference>
<dbReference type="GO" id="GO:0042866">
    <property type="term" value="P:pyruvate biosynthetic process"/>
    <property type="evidence" value="ECO:0007669"/>
    <property type="project" value="UniProtKB-UniRule"/>
</dbReference>
<dbReference type="GO" id="GO:0006744">
    <property type="term" value="P:ubiquinone biosynthetic process"/>
    <property type="evidence" value="ECO:0007669"/>
    <property type="project" value="UniProtKB-UniRule"/>
</dbReference>
<dbReference type="FunFam" id="3.40.1410.10:FF:000002">
    <property type="entry name" value="Chorismate pyruvate-lyase"/>
    <property type="match status" value="1"/>
</dbReference>
<dbReference type="Gene3D" id="3.40.1410.10">
    <property type="entry name" value="Chorismate lyase-like"/>
    <property type="match status" value="1"/>
</dbReference>
<dbReference type="HAMAP" id="MF_01632">
    <property type="entry name" value="UbiC"/>
    <property type="match status" value="1"/>
</dbReference>
<dbReference type="InterPro" id="IPR007440">
    <property type="entry name" value="Chorismate--pyruvate_lyase"/>
</dbReference>
<dbReference type="InterPro" id="IPR028978">
    <property type="entry name" value="Chorismate_lyase_/UTRA_dom_sf"/>
</dbReference>
<dbReference type="NCBIfam" id="NF008656">
    <property type="entry name" value="PRK11655.1"/>
    <property type="match status" value="1"/>
</dbReference>
<dbReference type="PANTHER" id="PTHR38683">
    <property type="entry name" value="CHORISMATE PYRUVATE-LYASE"/>
    <property type="match status" value="1"/>
</dbReference>
<dbReference type="PANTHER" id="PTHR38683:SF1">
    <property type="entry name" value="CHORISMATE PYRUVATE-LYASE"/>
    <property type="match status" value="1"/>
</dbReference>
<dbReference type="Pfam" id="PF04345">
    <property type="entry name" value="Chor_lyase"/>
    <property type="match status" value="1"/>
</dbReference>
<dbReference type="SUPFAM" id="SSF64288">
    <property type="entry name" value="Chorismate lyase-like"/>
    <property type="match status" value="1"/>
</dbReference>
<gene>
    <name evidence="1" type="primary">ubiC</name>
    <name type="ordered locus">ECSE_4331</name>
</gene>
<keyword id="KW-0963">Cytoplasm</keyword>
<keyword id="KW-0456">Lyase</keyword>
<keyword id="KW-0670">Pyruvate</keyword>
<keyword id="KW-0831">Ubiquinone biosynthesis</keyword>
<evidence type="ECO:0000255" key="1">
    <source>
        <dbReference type="HAMAP-Rule" id="MF_01632"/>
    </source>
</evidence>
<proteinExistence type="inferred from homology"/>
<protein>
    <recommendedName>
        <fullName evidence="1">Chorismate pyruvate-lyase</fullName>
        <shortName evidence="1">CL</shortName>
        <shortName evidence="1">CPL</shortName>
        <ecNumber evidence="1">4.1.3.40</ecNumber>
    </recommendedName>
</protein>
<reference key="1">
    <citation type="journal article" date="2008" name="DNA Res.">
        <title>Complete genome sequence and comparative analysis of the wild-type commensal Escherichia coli strain SE11 isolated from a healthy adult.</title>
        <authorList>
            <person name="Oshima K."/>
            <person name="Toh H."/>
            <person name="Ogura Y."/>
            <person name="Sasamoto H."/>
            <person name="Morita H."/>
            <person name="Park S.-H."/>
            <person name="Ooka T."/>
            <person name="Iyoda S."/>
            <person name="Taylor T.D."/>
            <person name="Hayashi T."/>
            <person name="Itoh K."/>
            <person name="Hattori M."/>
        </authorList>
    </citation>
    <scope>NUCLEOTIDE SEQUENCE [LARGE SCALE GENOMIC DNA]</scope>
    <source>
        <strain>SE11</strain>
    </source>
</reference>
<organism>
    <name type="scientific">Escherichia coli (strain SE11)</name>
    <dbReference type="NCBI Taxonomy" id="409438"/>
    <lineage>
        <taxon>Bacteria</taxon>
        <taxon>Pseudomonadati</taxon>
        <taxon>Pseudomonadota</taxon>
        <taxon>Gammaproteobacteria</taxon>
        <taxon>Enterobacterales</taxon>
        <taxon>Enterobacteriaceae</taxon>
        <taxon>Escherichia</taxon>
    </lineage>
</organism>
<sequence>MSHPALTQLRALRYFKEIPALDPQLLDWLLLEDSMTKRFEQQGKTVSVTMIREGFVEQNEIPEELPLLPKESRYWLREILLCADGEPWLAGRTVVPVSTLSGPELALQKLGKTPLGRYLFTSSTLTRDFIEIGRDAGLWGRRSRLRLSGKPLLLTELFLPASPLY</sequence>
<name>UBIC_ECOSE</name>
<accession>B6I5Q4</accession>
<feature type="chain" id="PRO_1000186526" description="Chorismate pyruvate-lyase">
    <location>
        <begin position="1"/>
        <end position="165"/>
    </location>
</feature>
<feature type="binding site" evidence="1">
    <location>
        <position position="35"/>
    </location>
    <ligand>
        <name>substrate</name>
    </ligand>
</feature>
<feature type="binding site" evidence="1">
    <location>
        <position position="77"/>
    </location>
    <ligand>
        <name>substrate</name>
    </ligand>
</feature>
<feature type="binding site" evidence="1">
    <location>
        <position position="115"/>
    </location>
    <ligand>
        <name>substrate</name>
    </ligand>
</feature>
<feature type="binding site" evidence="1">
    <location>
        <position position="156"/>
    </location>
    <ligand>
        <name>substrate</name>
    </ligand>
</feature>